<evidence type="ECO:0000255" key="1">
    <source>
        <dbReference type="HAMAP-Rule" id="MF_00859"/>
    </source>
</evidence>
<name>RBS_PORAE</name>
<dbReference type="EMBL" id="X17597">
    <property type="status" value="NOT_ANNOTATED_CDS"/>
    <property type="molecule type" value="Genomic_DNA"/>
</dbReference>
<dbReference type="PIR" id="B48330">
    <property type="entry name" value="B48330"/>
</dbReference>
<dbReference type="SMR" id="Q09125"/>
<dbReference type="GO" id="GO:0009507">
    <property type="term" value="C:chloroplast"/>
    <property type="evidence" value="ECO:0007669"/>
    <property type="project" value="UniProtKB-SubCell"/>
</dbReference>
<dbReference type="GO" id="GO:0016984">
    <property type="term" value="F:ribulose-bisphosphate carboxylase activity"/>
    <property type="evidence" value="ECO:0007669"/>
    <property type="project" value="UniProtKB-UniRule"/>
</dbReference>
<dbReference type="GO" id="GO:0019253">
    <property type="term" value="P:reductive pentose-phosphate cycle"/>
    <property type="evidence" value="ECO:0007669"/>
    <property type="project" value="UniProtKB-UniRule"/>
</dbReference>
<dbReference type="CDD" id="cd03527">
    <property type="entry name" value="RuBisCO_small"/>
    <property type="match status" value="1"/>
</dbReference>
<dbReference type="Gene3D" id="3.30.190.10">
    <property type="entry name" value="Ribulose bisphosphate carboxylase, small subunit"/>
    <property type="match status" value="1"/>
</dbReference>
<dbReference type="HAMAP" id="MF_00859">
    <property type="entry name" value="RuBisCO_S_bact"/>
    <property type="match status" value="1"/>
</dbReference>
<dbReference type="InterPro" id="IPR024681">
    <property type="entry name" value="RuBisCO_ssu"/>
</dbReference>
<dbReference type="InterPro" id="IPR000894">
    <property type="entry name" value="RuBisCO_ssu_dom"/>
</dbReference>
<dbReference type="InterPro" id="IPR036385">
    <property type="entry name" value="RuBisCO_ssu_sf"/>
</dbReference>
<dbReference type="PANTHER" id="PTHR31262">
    <property type="entry name" value="RIBULOSE BISPHOSPHATE CARBOXYLASE SMALL CHAIN 1, CHLOROPLASTIC"/>
    <property type="match status" value="1"/>
</dbReference>
<dbReference type="PANTHER" id="PTHR31262:SF23">
    <property type="entry name" value="RIBULOSE BISPHOSPHATE CARBOXYLASE SMALL SUBUNIT"/>
    <property type="match status" value="1"/>
</dbReference>
<dbReference type="Pfam" id="PF00101">
    <property type="entry name" value="RuBisCO_small"/>
    <property type="match status" value="1"/>
</dbReference>
<dbReference type="SMART" id="SM00961">
    <property type="entry name" value="RuBisCO_small"/>
    <property type="match status" value="1"/>
</dbReference>
<dbReference type="SUPFAM" id="SSF55239">
    <property type="entry name" value="RuBisCO, small subunit"/>
    <property type="match status" value="1"/>
</dbReference>
<comment type="function">
    <text evidence="1">RuBisCO catalyzes two reactions: the carboxylation of D-ribulose 1,5-bisphosphate, the primary event in carbon dioxide fixation, as well as the oxidative fragmentation of the pentose substrate in the photorespiration process. Both reactions occur simultaneously and in competition at the same active site. Although the small subunit is not catalytic it is essential for maximal activity.</text>
</comment>
<comment type="subunit">
    <text evidence="1">Heterohexadecamer of 8 large and 8 small subunits.</text>
</comment>
<comment type="subcellular location">
    <subcellularLocation>
        <location evidence="1">Plastid</location>
        <location evidence="1">Chloroplast</location>
    </subcellularLocation>
</comment>
<comment type="miscellaneous">
    <text>In this alga, in contrast to plants, the small subunit is encoded in the chloroplast.</text>
</comment>
<comment type="miscellaneous">
    <text evidence="1">The basic functional RuBisCO is composed of a large chain homodimer in a 'head-to-tail' conformation. In form I RuBisCO this homodimer is arranged in a barrel-like tetramer with the small subunits forming a tetrameric 'cap' on each end of the 'barrel'.</text>
</comment>
<comment type="similarity">
    <text evidence="1">Belongs to the RuBisCO small chain family.</text>
</comment>
<proteinExistence type="inferred from homology"/>
<keyword id="KW-0113">Calvin cycle</keyword>
<keyword id="KW-0120">Carbon dioxide fixation</keyword>
<keyword id="KW-0150">Chloroplast</keyword>
<keyword id="KW-0601">Photorespiration</keyword>
<keyword id="KW-0602">Photosynthesis</keyword>
<keyword id="KW-0934">Plastid</keyword>
<geneLocation type="chloroplast"/>
<gene>
    <name evidence="1" type="primary">rbcS</name>
</gene>
<feature type="chain" id="PRO_0000198603" description="Ribulose bisphosphate carboxylase small subunit">
    <location>
        <begin position="1"/>
        <end position="138"/>
    </location>
</feature>
<sequence>MRLTQGTFSFLPDLTDAQIQKQVQYAVSKKWAVSVEYTDDPHPRNSFWELWGLPLFDVKDASALMYEIAACRKAKPNYYIKVNAFDNTRGVESCCLSFIINRPINEPGFHLERQEVQGRNILYTIKSYAVNKPEGSRY</sequence>
<protein>
    <recommendedName>
        <fullName evidence="1">Ribulose bisphosphate carboxylase small subunit</fullName>
        <shortName evidence="1">RuBisCO small subunit</shortName>
    </recommendedName>
</protein>
<organism>
    <name type="scientific">Porphyridium aerugineum</name>
    <name type="common">Red microalga</name>
    <dbReference type="NCBI Taxonomy" id="2792"/>
    <lineage>
        <taxon>Eukaryota</taxon>
        <taxon>Rhodophyta</taxon>
        <taxon>Bangiophyceae</taxon>
        <taxon>Porphyridiales</taxon>
        <taxon>Porphyridiaceae</taxon>
        <taxon>Porphyridium</taxon>
    </lineage>
</organism>
<reference key="1">
    <citation type="journal article" date="1989" name="Curr. Genet.">
        <title>The genes of both subunits of ribulose-1,5-bisphosphate carboxylase constitute an operon on the plastome of a red alga.</title>
        <authorList>
            <person name="Valentin K.-U."/>
            <person name="Zetsche K."/>
        </authorList>
    </citation>
    <scope>NUCLEOTIDE SEQUENCE [GENOMIC DNA]</scope>
</reference>
<accession>Q09125</accession>